<organism>
    <name type="scientific">Mycoplasma pneumoniae (strain ATCC 29342 / M129 / Subtype 1)</name>
    <name type="common">Mycoplasmoides pneumoniae</name>
    <dbReference type="NCBI Taxonomy" id="272634"/>
    <lineage>
        <taxon>Bacteria</taxon>
        <taxon>Bacillati</taxon>
        <taxon>Mycoplasmatota</taxon>
        <taxon>Mycoplasmoidales</taxon>
        <taxon>Mycoplasmoidaceae</taxon>
        <taxon>Mycoplasmoides</taxon>
    </lineage>
</organism>
<keyword id="KW-1185">Reference proteome</keyword>
<dbReference type="EMBL" id="U00089">
    <property type="protein sequence ID" value="AAB96113.1"/>
    <property type="molecule type" value="Genomic_DNA"/>
</dbReference>
<dbReference type="PIR" id="S73791">
    <property type="entry name" value="S73791"/>
</dbReference>
<dbReference type="STRING" id="272634.MPN_371"/>
<dbReference type="EnsemblBacteria" id="AAB96113">
    <property type="protein sequence ID" value="AAB96113"/>
    <property type="gene ID" value="MPN_371"/>
</dbReference>
<dbReference type="KEGG" id="mpn:MPN_371"/>
<dbReference type="HOGENOM" id="CLU_1303779_0_0_14"/>
<dbReference type="Proteomes" id="UP000000808">
    <property type="component" value="Chromosome"/>
</dbReference>
<protein>
    <recommendedName>
        <fullName>Uncharacterized protein MPN_371</fullName>
    </recommendedName>
</protein>
<comment type="induction">
    <text evidence="1">Expressed during cell growth.</text>
</comment>
<proteinExistence type="evidence at transcript level"/>
<feature type="chain" id="PRO_0000210664" description="Uncharacterized protein MPN_371">
    <location>
        <begin position="1"/>
        <end position="211"/>
    </location>
</feature>
<gene>
    <name type="ordered locus">MPN_371</name>
    <name type="ORF">A19_orf211</name>
    <name type="ORF">MP465</name>
</gene>
<evidence type="ECO:0000269" key="1">
    <source>
    </source>
</evidence>
<accession>P75410</accession>
<name>Y371_MYCPN</name>
<reference key="1">
    <citation type="journal article" date="1996" name="Nucleic Acids Res.">
        <title>Complete sequence analysis of the genome of the bacterium Mycoplasma pneumoniae.</title>
        <authorList>
            <person name="Himmelreich R."/>
            <person name="Hilbert H."/>
            <person name="Plagens H."/>
            <person name="Pirkl E."/>
            <person name="Li B.-C."/>
            <person name="Herrmann R."/>
        </authorList>
    </citation>
    <scope>NUCLEOTIDE SEQUENCE [LARGE SCALE GENOMIC DNA]</scope>
    <source>
        <strain>ATCC 29342 / M129 / Subtype 1</strain>
    </source>
</reference>
<reference key="2">
    <citation type="journal article" date="2010" name="Mol. Microbiol.">
        <title>Mycoplasma pneumoniae Community Acquired Respiratory Distress Syndrome toxin expression reveals growth phase and infection-dependent regulation.</title>
        <authorList>
            <person name="Kannan T.R."/>
            <person name="Musatovova O."/>
            <person name="Balasubramanian S."/>
            <person name="Cagle M."/>
            <person name="Jordan J.L."/>
            <person name="Krunkosky T.M."/>
            <person name="Davis A."/>
            <person name="Hardy R.D."/>
            <person name="Baseman J.B."/>
        </authorList>
    </citation>
    <scope>INDUCTION</scope>
    <source>
        <strain>S1</strain>
    </source>
</reference>
<sequence length="211" mass="23592">MRIEAANLAGSLWICSVVNHGVQGVGVPSWVPDPELEGAVPKSSALSWTCWLLLEPRLIGALARLLVSSSIWPLSSESDFFFTATCNALTLVSPDEPHVGWIGQIQMWLKNQWPQRPGVFHCSSRCPPRRSSPSSQTLPRWWKYFDHSRFAAVVSPTPFATAHSTPRCAARVKRQTGRDWRGLAPPRRGPCFWPRFTVGVQPHSNQSRQRG</sequence>